<organism>
    <name type="scientific">Campylobacter jejuni subsp. jejuni serotype O:6 (strain 81116 / NCTC 11828)</name>
    <dbReference type="NCBI Taxonomy" id="407148"/>
    <lineage>
        <taxon>Bacteria</taxon>
        <taxon>Pseudomonadati</taxon>
        <taxon>Campylobacterota</taxon>
        <taxon>Epsilonproteobacteria</taxon>
        <taxon>Campylobacterales</taxon>
        <taxon>Campylobacteraceae</taxon>
        <taxon>Campylobacter</taxon>
    </lineage>
</organism>
<sequence length="364" mass="41381">MKFNEFLNHLSNYEPGKDIEVIAKEYGVKEVIKLASNENPFGTPPKAIECLRQNANKAHLYPDDSMIELKSTLAQKYKVQNENIIIGAGSDQVIEFAIHAKLNSKNAFLQAGVTFAMYEIYAKQCGAKCYKTQSITHDLNEFKKLYEAHKDEIKLIFLCLPNNPLGECLDASEVTKFIKGVDEDCLVVIDAAYNEFASFKDSKKHLEPCELIKEFDNVLYLGTFSKLYGLGGLRIGYGIANANIINAFYKLRAPFNVSNLALKAAVAAIDDDEFTKKTLENNFSQMQLYKEFAKKHNIKIIDSYTNFITYFFDEKNSTDLSEKLLKKGIIIRNLKSYGLNAIRITIGTSYENEKFFTEFDKILR</sequence>
<gene>
    <name evidence="1" type="primary">hisC</name>
    <name type="ordered locus">C8J_0294</name>
</gene>
<dbReference type="EC" id="2.6.1.9" evidence="1"/>
<dbReference type="EMBL" id="CP000814">
    <property type="protein sequence ID" value="ABV51893.1"/>
    <property type="molecule type" value="Genomic_DNA"/>
</dbReference>
<dbReference type="RefSeq" id="WP_012006641.1">
    <property type="nucleotide sequence ID" value="NC_009839.1"/>
</dbReference>
<dbReference type="SMR" id="A8FKA6"/>
<dbReference type="KEGG" id="cju:C8J_0294"/>
<dbReference type="HOGENOM" id="CLU_017584_3_3_7"/>
<dbReference type="UniPathway" id="UPA00031">
    <property type="reaction ID" value="UER00012"/>
</dbReference>
<dbReference type="GO" id="GO:0004400">
    <property type="term" value="F:histidinol-phosphate transaminase activity"/>
    <property type="evidence" value="ECO:0007669"/>
    <property type="project" value="UniProtKB-UniRule"/>
</dbReference>
<dbReference type="GO" id="GO:0030170">
    <property type="term" value="F:pyridoxal phosphate binding"/>
    <property type="evidence" value="ECO:0007669"/>
    <property type="project" value="InterPro"/>
</dbReference>
<dbReference type="GO" id="GO:0000105">
    <property type="term" value="P:L-histidine biosynthetic process"/>
    <property type="evidence" value="ECO:0007669"/>
    <property type="project" value="UniProtKB-UniRule"/>
</dbReference>
<dbReference type="CDD" id="cd00609">
    <property type="entry name" value="AAT_like"/>
    <property type="match status" value="1"/>
</dbReference>
<dbReference type="Gene3D" id="3.90.1150.10">
    <property type="entry name" value="Aspartate Aminotransferase, domain 1"/>
    <property type="match status" value="1"/>
</dbReference>
<dbReference type="Gene3D" id="3.40.640.10">
    <property type="entry name" value="Type I PLP-dependent aspartate aminotransferase-like (Major domain)"/>
    <property type="match status" value="1"/>
</dbReference>
<dbReference type="HAMAP" id="MF_01023">
    <property type="entry name" value="HisC_aminotrans_2"/>
    <property type="match status" value="1"/>
</dbReference>
<dbReference type="InterPro" id="IPR004839">
    <property type="entry name" value="Aminotransferase_I/II_large"/>
</dbReference>
<dbReference type="InterPro" id="IPR005861">
    <property type="entry name" value="HisP_aminotrans"/>
</dbReference>
<dbReference type="InterPro" id="IPR050106">
    <property type="entry name" value="HistidinolP_aminotransfase"/>
</dbReference>
<dbReference type="InterPro" id="IPR015424">
    <property type="entry name" value="PyrdxlP-dep_Trfase"/>
</dbReference>
<dbReference type="InterPro" id="IPR015421">
    <property type="entry name" value="PyrdxlP-dep_Trfase_major"/>
</dbReference>
<dbReference type="InterPro" id="IPR015422">
    <property type="entry name" value="PyrdxlP-dep_Trfase_small"/>
</dbReference>
<dbReference type="NCBIfam" id="TIGR01141">
    <property type="entry name" value="hisC"/>
    <property type="match status" value="1"/>
</dbReference>
<dbReference type="PANTHER" id="PTHR43643:SF3">
    <property type="entry name" value="HISTIDINOL-PHOSPHATE AMINOTRANSFERASE"/>
    <property type="match status" value="1"/>
</dbReference>
<dbReference type="PANTHER" id="PTHR43643">
    <property type="entry name" value="HISTIDINOL-PHOSPHATE AMINOTRANSFERASE 2"/>
    <property type="match status" value="1"/>
</dbReference>
<dbReference type="Pfam" id="PF00155">
    <property type="entry name" value="Aminotran_1_2"/>
    <property type="match status" value="1"/>
</dbReference>
<dbReference type="SUPFAM" id="SSF53383">
    <property type="entry name" value="PLP-dependent transferases"/>
    <property type="match status" value="1"/>
</dbReference>
<keyword id="KW-0028">Amino-acid biosynthesis</keyword>
<keyword id="KW-0032">Aminotransferase</keyword>
<keyword id="KW-0368">Histidine biosynthesis</keyword>
<keyword id="KW-0663">Pyridoxal phosphate</keyword>
<keyword id="KW-0808">Transferase</keyword>
<proteinExistence type="inferred from homology"/>
<evidence type="ECO:0000255" key="1">
    <source>
        <dbReference type="HAMAP-Rule" id="MF_01023"/>
    </source>
</evidence>
<comment type="catalytic activity">
    <reaction evidence="1">
        <text>L-histidinol phosphate + 2-oxoglutarate = 3-(imidazol-4-yl)-2-oxopropyl phosphate + L-glutamate</text>
        <dbReference type="Rhea" id="RHEA:23744"/>
        <dbReference type="ChEBI" id="CHEBI:16810"/>
        <dbReference type="ChEBI" id="CHEBI:29985"/>
        <dbReference type="ChEBI" id="CHEBI:57766"/>
        <dbReference type="ChEBI" id="CHEBI:57980"/>
        <dbReference type="EC" id="2.6.1.9"/>
    </reaction>
</comment>
<comment type="cofactor">
    <cofactor evidence="1">
        <name>pyridoxal 5'-phosphate</name>
        <dbReference type="ChEBI" id="CHEBI:597326"/>
    </cofactor>
</comment>
<comment type="pathway">
    <text evidence="1">Amino-acid biosynthesis; L-histidine biosynthesis; L-histidine from 5-phospho-alpha-D-ribose 1-diphosphate: step 7/9.</text>
</comment>
<comment type="subunit">
    <text evidence="1">Homodimer.</text>
</comment>
<comment type="similarity">
    <text evidence="1">Belongs to the class-II pyridoxal-phosphate-dependent aminotransferase family. Histidinol-phosphate aminotransferase subfamily.</text>
</comment>
<reference key="1">
    <citation type="journal article" date="2007" name="J. Bacteriol.">
        <title>The complete genome sequence of Campylobacter jejuni strain 81116 (NCTC11828).</title>
        <authorList>
            <person name="Pearson B.M."/>
            <person name="Gaskin D.J.H."/>
            <person name="Segers R.P.A.M."/>
            <person name="Wells J.M."/>
            <person name="Nuijten P.J.M."/>
            <person name="van Vliet A.H.M."/>
        </authorList>
    </citation>
    <scope>NUCLEOTIDE SEQUENCE [LARGE SCALE GENOMIC DNA]</scope>
    <source>
        <strain>81116 / NCTC 11828</strain>
    </source>
</reference>
<feature type="chain" id="PRO_1000072943" description="Histidinol-phosphate aminotransferase">
    <location>
        <begin position="1"/>
        <end position="364"/>
    </location>
</feature>
<feature type="modified residue" description="N6-(pyridoxal phosphate)lysine" evidence="1">
    <location>
        <position position="226"/>
    </location>
</feature>
<accession>A8FKA6</accession>
<name>HIS8_CAMJ8</name>
<protein>
    <recommendedName>
        <fullName evidence="1">Histidinol-phosphate aminotransferase</fullName>
        <ecNumber evidence="1">2.6.1.9</ecNumber>
    </recommendedName>
    <alternativeName>
        <fullName evidence="1">Imidazole acetol-phosphate transaminase</fullName>
    </alternativeName>
</protein>